<accession>P93757</accession>
<accession>Q683H2</accession>
<accession>Q9M681</accession>
<accession>Q9M683</accession>
<sequence length="387" mass="42668">MGEAPAVLVDHPENGHSNGVCVKSEPENTEITVDVGDRIFLIGGTHERNNFSIGVQIYDKISNNWFSPIVLGTGPKPSKGYSAFVLEQGRILVIKKGSPRNDSIWFLEVDSPYVREQKKLLRKEVVAWSKGVRGNAEKPIVISGPSGVGKGTLISMLMKEFPSMFGFSVSHTTRSPRSMEMDGVHYHFADKKVMEKEIKDGKFLEFASVHGNLYGTSIESVEAVTDSGKRCILDIDVQGARSVRASSLDAIFIFVCPPSMKELEDRLRARGTETEEQIQKRLRNAEAEIKEGISSGIFGLILYNDNLEECYKKLKNLLGLDGLAHVNGVEIEGINLPIEYAVSKMEDKIIIQETGKETRNKIVVDISSLNGGAPGRTRGILVDAIKF</sequence>
<name>GMK1_ARATH</name>
<proteinExistence type="evidence at protein level"/>
<feature type="chain" id="PRO_0000430125" description="Guanylate kinase 1">
    <location>
        <begin position="1"/>
        <end position="387"/>
    </location>
</feature>
<feature type="domain" description="Guanylate kinase-like" evidence="2">
    <location>
        <begin position="137"/>
        <end position="319"/>
    </location>
</feature>
<feature type="active site" evidence="1">
    <location>
        <position position="177"/>
    </location>
</feature>
<feature type="active site" evidence="1">
    <location>
        <position position="270"/>
    </location>
</feature>
<feature type="active site" evidence="1">
    <location>
        <position position="281"/>
    </location>
</feature>
<feature type="binding site" evidence="2">
    <location>
        <begin position="144"/>
        <end position="151"/>
    </location>
    <ligand>
        <name>ATP</name>
        <dbReference type="ChEBI" id="CHEBI:30616"/>
    </ligand>
</feature>
<feature type="binding site" evidence="1">
    <location>
        <position position="304"/>
    </location>
    <ligand>
        <name>ATP</name>
        <dbReference type="ChEBI" id="CHEBI:30616"/>
    </ligand>
</feature>
<feature type="binding site" evidence="1">
    <location>
        <position position="305"/>
    </location>
    <ligand>
        <name>ATP</name>
        <dbReference type="ChEBI" id="CHEBI:30616"/>
    </ligand>
</feature>
<feature type="sequence conflict" description="In Ref. 1; AAF70408/AAF60252." evidence="5" ref="1">
    <original>T</original>
    <variation>N</variation>
    <location>
        <position position="45"/>
    </location>
</feature>
<feature type="sequence conflict" description="In Ref. 1; AAF70408/AAF60252." evidence="5" ref="1">
    <original>H</original>
    <variation>Y</variation>
    <location>
        <position position="187"/>
    </location>
</feature>
<feature type="sequence conflict" description="In Ref. 1; AAF60252." evidence="5" ref="1">
    <original>R</original>
    <variation>I</variation>
    <location>
        <position position="270"/>
    </location>
</feature>
<feature type="sequence conflict" description="In Ref. 1; AAF70408/AAF60252." evidence="5" ref="1">
    <original>A</original>
    <variation>T</variation>
    <location>
        <position position="341"/>
    </location>
</feature>
<feature type="sequence conflict" description="In Ref. 1; AAF70408/AAF60252." evidence="5" ref="1">
    <original>V</original>
    <variation>L</variation>
    <location>
        <position position="364"/>
    </location>
</feature>
<feature type="sequence conflict" description="In Ref. 4; BAD42908." evidence="5" ref="4">
    <original>P</original>
    <variation>Q</variation>
    <location>
        <position position="374"/>
    </location>
</feature>
<dbReference type="EC" id="2.7.4.8"/>
<dbReference type="EMBL" id="AF204675">
    <property type="protein sequence ID" value="AAF70408.1"/>
    <property type="molecule type" value="mRNA"/>
</dbReference>
<dbReference type="EMBL" id="AF204677">
    <property type="protein sequence ID" value="AAF60252.1"/>
    <property type="molecule type" value="Genomic_DNA"/>
</dbReference>
<dbReference type="EMBL" id="AC002339">
    <property type="protein sequence ID" value="AAM14825.1"/>
    <property type="molecule type" value="Genomic_DNA"/>
</dbReference>
<dbReference type="EMBL" id="U90439">
    <property type="protein sequence ID" value="AAF18683.2"/>
    <property type="molecule type" value="Genomic_DNA"/>
</dbReference>
<dbReference type="EMBL" id="CP002685">
    <property type="protein sequence ID" value="AEC10044.1"/>
    <property type="molecule type" value="Genomic_DNA"/>
</dbReference>
<dbReference type="EMBL" id="CP002685">
    <property type="protein sequence ID" value="ANM61415.1"/>
    <property type="molecule type" value="Genomic_DNA"/>
</dbReference>
<dbReference type="EMBL" id="AK175145">
    <property type="protein sequence ID" value="BAD42908.1"/>
    <property type="molecule type" value="mRNA"/>
</dbReference>
<dbReference type="EMBL" id="BT028912">
    <property type="protein sequence ID" value="ABI49459.1"/>
    <property type="molecule type" value="mRNA"/>
</dbReference>
<dbReference type="PIR" id="C84847">
    <property type="entry name" value="C84847"/>
</dbReference>
<dbReference type="PIR" id="T50675">
    <property type="entry name" value="T50675"/>
</dbReference>
<dbReference type="RefSeq" id="NP_001323632.1">
    <property type="nucleotide sequence ID" value="NM_001336943.1"/>
</dbReference>
<dbReference type="RefSeq" id="NP_565961.1">
    <property type="nucleotide sequence ID" value="NM_129752.5"/>
</dbReference>
<dbReference type="SMR" id="P93757"/>
<dbReference type="FunCoup" id="P93757">
    <property type="interactions" value="268"/>
</dbReference>
<dbReference type="STRING" id="3702.P93757"/>
<dbReference type="iPTMnet" id="P93757"/>
<dbReference type="PaxDb" id="3702-AT2G41880.1"/>
<dbReference type="ProteomicsDB" id="247008"/>
<dbReference type="DNASU" id="818788"/>
<dbReference type="EnsemblPlants" id="AT2G41880.1">
    <property type="protein sequence ID" value="AT2G41880.1"/>
    <property type="gene ID" value="AT2G41880"/>
</dbReference>
<dbReference type="EnsemblPlants" id="AT2G41880.7">
    <property type="protein sequence ID" value="AT2G41880.7"/>
    <property type="gene ID" value="AT2G41880"/>
</dbReference>
<dbReference type="GeneID" id="818788"/>
<dbReference type="Gramene" id="AT2G41880.1">
    <property type="protein sequence ID" value="AT2G41880.1"/>
    <property type="gene ID" value="AT2G41880"/>
</dbReference>
<dbReference type="Gramene" id="AT2G41880.7">
    <property type="protein sequence ID" value="AT2G41880.7"/>
    <property type="gene ID" value="AT2G41880"/>
</dbReference>
<dbReference type="KEGG" id="ath:AT2G41880"/>
<dbReference type="Araport" id="AT2G41880"/>
<dbReference type="TAIR" id="AT2G41880">
    <property type="gene designation" value="GK-1"/>
</dbReference>
<dbReference type="eggNOG" id="KOG0707">
    <property type="taxonomic scope" value="Eukaryota"/>
</dbReference>
<dbReference type="HOGENOM" id="CLU_037258_0_0_1"/>
<dbReference type="InParanoid" id="P93757"/>
<dbReference type="PhylomeDB" id="P93757"/>
<dbReference type="BioCyc" id="ARA:AT2G41880-MONOMER"/>
<dbReference type="BioCyc" id="MetaCyc:AT2G41880-MONOMER"/>
<dbReference type="SABIO-RK" id="P93757"/>
<dbReference type="PRO" id="PR:P93757"/>
<dbReference type="Proteomes" id="UP000006548">
    <property type="component" value="Chromosome 2"/>
</dbReference>
<dbReference type="ExpressionAtlas" id="P93757">
    <property type="expression patterns" value="baseline and differential"/>
</dbReference>
<dbReference type="GO" id="GO:0005524">
    <property type="term" value="F:ATP binding"/>
    <property type="evidence" value="ECO:0007669"/>
    <property type="project" value="UniProtKB-KW"/>
</dbReference>
<dbReference type="GO" id="GO:0004385">
    <property type="term" value="F:guanylate kinase activity"/>
    <property type="evidence" value="ECO:0000314"/>
    <property type="project" value="TAIR"/>
</dbReference>
<dbReference type="GO" id="GO:0048229">
    <property type="term" value="P:gametophyte development"/>
    <property type="evidence" value="ECO:0000316"/>
    <property type="project" value="UniProtKB"/>
</dbReference>
<dbReference type="GO" id="GO:0009117">
    <property type="term" value="P:nucleotide metabolic process"/>
    <property type="evidence" value="ECO:0000304"/>
    <property type="project" value="TAIR"/>
</dbReference>
<dbReference type="CDD" id="cd00071">
    <property type="entry name" value="GMPK"/>
    <property type="match status" value="1"/>
</dbReference>
<dbReference type="FunFam" id="3.30.63.10:FF:000002">
    <property type="entry name" value="Guanylate kinase 1"/>
    <property type="match status" value="1"/>
</dbReference>
<dbReference type="FunFam" id="3.40.50.300:FF:000776">
    <property type="entry name" value="Guanylate kinase 2"/>
    <property type="match status" value="1"/>
</dbReference>
<dbReference type="Gene3D" id="2.120.10.80">
    <property type="entry name" value="Kelch-type beta propeller"/>
    <property type="match status" value="1"/>
</dbReference>
<dbReference type="Gene3D" id="3.40.50.300">
    <property type="entry name" value="P-loop containing nucleotide triphosphate hydrolases"/>
    <property type="match status" value="1"/>
</dbReference>
<dbReference type="InterPro" id="IPR011043">
    <property type="entry name" value="Gal_Oxase/kelch_b-propeller"/>
</dbReference>
<dbReference type="InterPro" id="IPR008145">
    <property type="entry name" value="GK/Ca_channel_bsu"/>
</dbReference>
<dbReference type="InterPro" id="IPR008144">
    <property type="entry name" value="Guanylate_kin-like_dom"/>
</dbReference>
<dbReference type="InterPro" id="IPR017665">
    <property type="entry name" value="Guanylate_kinase"/>
</dbReference>
<dbReference type="InterPro" id="IPR015915">
    <property type="entry name" value="Kelch-typ_b-propeller"/>
</dbReference>
<dbReference type="InterPro" id="IPR027417">
    <property type="entry name" value="P-loop_NTPase"/>
</dbReference>
<dbReference type="NCBIfam" id="TIGR03263">
    <property type="entry name" value="guanyl_kin"/>
    <property type="match status" value="1"/>
</dbReference>
<dbReference type="PANTHER" id="PTHR23117:SF13">
    <property type="entry name" value="GUANYLATE KINASE"/>
    <property type="match status" value="1"/>
</dbReference>
<dbReference type="PANTHER" id="PTHR23117">
    <property type="entry name" value="GUANYLATE KINASE-RELATED"/>
    <property type="match status" value="1"/>
</dbReference>
<dbReference type="Pfam" id="PF00625">
    <property type="entry name" value="Guanylate_kin"/>
    <property type="match status" value="1"/>
</dbReference>
<dbReference type="SMART" id="SM00072">
    <property type="entry name" value="GuKc"/>
    <property type="match status" value="1"/>
</dbReference>
<dbReference type="SUPFAM" id="SSF50965">
    <property type="entry name" value="Galactose oxidase, central domain"/>
    <property type="match status" value="1"/>
</dbReference>
<dbReference type="SUPFAM" id="SSF52540">
    <property type="entry name" value="P-loop containing nucleoside triphosphate hydrolases"/>
    <property type="match status" value="1"/>
</dbReference>
<dbReference type="PROSITE" id="PS50052">
    <property type="entry name" value="GUANYLATE_KINASE_2"/>
    <property type="match status" value="1"/>
</dbReference>
<protein>
    <recommendedName>
        <fullName>Guanylate kinase 1</fullName>
        <shortName>AtGK1</shortName>
        <ecNumber>2.7.4.8</ecNumber>
    </recommendedName>
    <alternativeName>
        <fullName>GMP kinase 1</fullName>
    </alternativeName>
</protein>
<gene>
    <name type="primary">GK-1</name>
    <name type="synonym">AGK1</name>
    <name type="ordered locus">At2g41880</name>
    <name type="ORF">T11A7.23</name>
</gene>
<evidence type="ECO:0000250" key="1"/>
<evidence type="ECO:0000255" key="2">
    <source>
        <dbReference type="PROSITE-ProRule" id="PRU00100"/>
    </source>
</evidence>
<evidence type="ECO:0000269" key="3">
    <source>
    </source>
</evidence>
<evidence type="ECO:0000269" key="4">
    <source>
    </source>
</evidence>
<evidence type="ECO:0000305" key="5"/>
<organism>
    <name type="scientific">Arabidopsis thaliana</name>
    <name type="common">Mouse-ear cress</name>
    <dbReference type="NCBI Taxonomy" id="3702"/>
    <lineage>
        <taxon>Eukaryota</taxon>
        <taxon>Viridiplantae</taxon>
        <taxon>Streptophyta</taxon>
        <taxon>Embryophyta</taxon>
        <taxon>Tracheophyta</taxon>
        <taxon>Spermatophyta</taxon>
        <taxon>Magnoliopsida</taxon>
        <taxon>eudicotyledons</taxon>
        <taxon>Gunneridae</taxon>
        <taxon>Pentapetalae</taxon>
        <taxon>rosids</taxon>
        <taxon>malvids</taxon>
        <taxon>Brassicales</taxon>
        <taxon>Brassicaceae</taxon>
        <taxon>Camelineae</taxon>
        <taxon>Arabidopsis</taxon>
    </lineage>
</organism>
<keyword id="KW-0067">ATP-binding</keyword>
<keyword id="KW-0418">Kinase</keyword>
<keyword id="KW-0547">Nucleotide-binding</keyword>
<keyword id="KW-1185">Reference proteome</keyword>
<keyword id="KW-0808">Transferase</keyword>
<comment type="function">
    <text evidence="3 4">Essential for recycling GMP and indirectly, cGMP. Required for normal development of the gametophyte and embryo, in association with GK2.</text>
</comment>
<comment type="catalytic activity">
    <reaction evidence="3">
        <text>GMP + ATP = GDP + ADP</text>
        <dbReference type="Rhea" id="RHEA:20780"/>
        <dbReference type="ChEBI" id="CHEBI:30616"/>
        <dbReference type="ChEBI" id="CHEBI:58115"/>
        <dbReference type="ChEBI" id="CHEBI:58189"/>
        <dbReference type="ChEBI" id="CHEBI:456216"/>
        <dbReference type="EC" id="2.7.4.8"/>
    </reaction>
</comment>
<comment type="biophysicochemical properties">
    <kinetics>
        <KM evidence="3">50.6 uM for ATP</KM>
        <KM evidence="3">6.4 uM for GMP</KM>
    </kinetics>
</comment>
<comment type="subunit">
    <text evidence="1">Monomer.</text>
</comment>
<comment type="disruption phenotype">
    <text evidence="4">No visible phenotype under normal growth conditions, but the double mutant atgk1 and atgk2 is lethal.</text>
</comment>
<comment type="similarity">
    <text evidence="5">Belongs to the guanylate kinase family.</text>
</comment>
<reference key="1">
    <citation type="journal article" date="2000" name="Eur. J. Biochem.">
        <title>Cloning of the guanylate kinase homologues AGK-1 and AGK-2 from Arabidopsis thaliana and characterization of AGK-1.</title>
        <authorList>
            <person name="Kumar V."/>
            <person name="Spangenberg O."/>
            <person name="Konrad M."/>
        </authorList>
    </citation>
    <scope>NUCLEOTIDE SEQUENCE [GENOMIC DNA / MRNA]</scope>
    <scope>FUNCTION</scope>
    <scope>CATALYTIC ACTIVITY</scope>
    <scope>BIOPHYSICOCHEMICAL PROPERTIES</scope>
    <source>
        <strain>cv. Columbia</strain>
    </source>
</reference>
<reference key="2">
    <citation type="journal article" date="1999" name="Nature">
        <title>Sequence and analysis of chromosome 2 of the plant Arabidopsis thaliana.</title>
        <authorList>
            <person name="Lin X."/>
            <person name="Kaul S."/>
            <person name="Rounsley S.D."/>
            <person name="Shea T.P."/>
            <person name="Benito M.-I."/>
            <person name="Town C.D."/>
            <person name="Fujii C.Y."/>
            <person name="Mason T.M."/>
            <person name="Bowman C.L."/>
            <person name="Barnstead M.E."/>
            <person name="Feldblyum T.V."/>
            <person name="Buell C.R."/>
            <person name="Ketchum K.A."/>
            <person name="Lee J.J."/>
            <person name="Ronning C.M."/>
            <person name="Koo H.L."/>
            <person name="Moffat K.S."/>
            <person name="Cronin L.A."/>
            <person name="Shen M."/>
            <person name="Pai G."/>
            <person name="Van Aken S."/>
            <person name="Umayam L."/>
            <person name="Tallon L.J."/>
            <person name="Gill J.E."/>
            <person name="Adams M.D."/>
            <person name="Carrera A.J."/>
            <person name="Creasy T.H."/>
            <person name="Goodman H.M."/>
            <person name="Somerville C.R."/>
            <person name="Copenhaver G.P."/>
            <person name="Preuss D."/>
            <person name="Nierman W.C."/>
            <person name="White O."/>
            <person name="Eisen J.A."/>
            <person name="Salzberg S.L."/>
            <person name="Fraser C.M."/>
            <person name="Venter J.C."/>
        </authorList>
    </citation>
    <scope>NUCLEOTIDE SEQUENCE [LARGE SCALE GENOMIC DNA]</scope>
    <source>
        <strain>cv. Columbia</strain>
    </source>
</reference>
<reference key="3">
    <citation type="journal article" date="2017" name="Plant J.">
        <title>Araport11: a complete reannotation of the Arabidopsis thaliana reference genome.</title>
        <authorList>
            <person name="Cheng C.Y."/>
            <person name="Krishnakumar V."/>
            <person name="Chan A.P."/>
            <person name="Thibaud-Nissen F."/>
            <person name="Schobel S."/>
            <person name="Town C.D."/>
        </authorList>
    </citation>
    <scope>GENOME REANNOTATION</scope>
    <source>
        <strain>cv. Columbia</strain>
    </source>
</reference>
<reference key="4">
    <citation type="submission" date="2004-09" db="EMBL/GenBank/DDBJ databases">
        <title>Large-scale analysis of RIKEN Arabidopsis full-length (RAFL) cDNAs.</title>
        <authorList>
            <person name="Totoki Y."/>
            <person name="Seki M."/>
            <person name="Ishida J."/>
            <person name="Nakajima M."/>
            <person name="Enju A."/>
            <person name="Kamiya A."/>
            <person name="Narusaka M."/>
            <person name="Shin-i T."/>
            <person name="Nakagawa M."/>
            <person name="Sakamoto N."/>
            <person name="Oishi K."/>
            <person name="Kohara Y."/>
            <person name="Kobayashi M."/>
            <person name="Toyoda A."/>
            <person name="Sakaki Y."/>
            <person name="Sakurai T."/>
            <person name="Iida K."/>
            <person name="Akiyama K."/>
            <person name="Satou M."/>
            <person name="Toyoda T."/>
            <person name="Konagaya A."/>
            <person name="Carninci P."/>
            <person name="Kawai J."/>
            <person name="Hayashizaki Y."/>
            <person name="Shinozaki K."/>
        </authorList>
    </citation>
    <scope>NUCLEOTIDE SEQUENCE [LARGE SCALE MRNA]</scope>
    <source>
        <strain>cv. Columbia</strain>
    </source>
</reference>
<reference key="5">
    <citation type="submission" date="2006-09" db="EMBL/GenBank/DDBJ databases">
        <title>Arabidopsis ORF Clones.</title>
        <authorList>
            <person name="Bautista V.R."/>
            <person name="Kim C.J."/>
            <person name="Chen H."/>
            <person name="Quinitio C."/>
            <person name="Ecker J.R."/>
        </authorList>
    </citation>
    <scope>NUCLEOTIDE SEQUENCE [LARGE SCALE MRNA]</scope>
    <source>
        <strain>cv. Columbia</strain>
    </source>
</reference>
<reference key="6">
    <citation type="journal article" date="2007" name="Plant J.">
        <title>The rice nuclear gene, VIRESCENT 2, is essential for chloroplast development and encodes a novel type of guanylate kinase targeted to plastids and mitochondria.</title>
        <authorList>
            <person name="Sugimoto H."/>
            <person name="Kusumi K."/>
            <person name="Noguchi K."/>
            <person name="Yano M."/>
            <person name="Yoshimura A."/>
            <person name="Iba K."/>
        </authorList>
    </citation>
    <scope>FUNCTION</scope>
    <scope>DISRUPTION PHENOTYPE</scope>
</reference>